<accession>Q6LFN2</accession>
<feature type="chain" id="PRO_0000356835" description="Trophozoite exported protein 1">
    <location>
        <begin position="1"/>
        <end position="1103"/>
    </location>
</feature>
<feature type="zinc finger region" description="RING-type" evidence="2">
    <location>
        <begin position="1050"/>
        <end position="1089"/>
    </location>
</feature>
<feature type="region of interest" description="Disordered" evidence="3">
    <location>
        <begin position="178"/>
        <end position="210"/>
    </location>
</feature>
<feature type="region of interest" description="Disordered" evidence="3">
    <location>
        <begin position="271"/>
        <end position="301"/>
    </location>
</feature>
<feature type="region of interest" description="Disordered" evidence="3">
    <location>
        <begin position="544"/>
        <end position="601"/>
    </location>
</feature>
<feature type="coiled-coil region" evidence="1">
    <location>
        <begin position="173"/>
        <end position="212"/>
    </location>
</feature>
<feature type="coiled-coil region" evidence="1">
    <location>
        <begin position="304"/>
        <end position="330"/>
    </location>
</feature>
<feature type="coiled-coil region" evidence="1">
    <location>
        <begin position="478"/>
        <end position="518"/>
    </location>
</feature>
<feature type="coiled-coil region" evidence="1">
    <location>
        <begin position="650"/>
        <end position="791"/>
    </location>
</feature>
<feature type="coiled-coil region" evidence="1">
    <location>
        <begin position="819"/>
        <end position="932"/>
    </location>
</feature>
<feature type="coiled-coil region" evidence="1">
    <location>
        <begin position="993"/>
        <end position="1030"/>
    </location>
</feature>
<feature type="compositionally biased region" description="Acidic residues" evidence="3">
    <location>
        <begin position="184"/>
        <end position="210"/>
    </location>
</feature>
<feature type="compositionally biased region" description="Basic and acidic residues" evidence="3">
    <location>
        <begin position="271"/>
        <end position="280"/>
    </location>
</feature>
<feature type="compositionally biased region" description="Low complexity" evidence="3">
    <location>
        <begin position="568"/>
        <end position="585"/>
    </location>
</feature>
<name>TEXP1_PLAF7</name>
<sequence length="1103" mass="132471">MSNKKRSKNENDESTSLPLENSELLIEYIHNLKSCLNVYRREIQEKNKYISIIKNDLSFHECILTNVNVVWSVFNNDLLNLLCNNEQKEEGEEIIKQRNIGDEINEYNNLTKLQNDENIKNNNMIKEDLEDDANQNILMKSPYYNIENFLQVFLKYINKKKKKVKVKVKDEGKKEKIEDKKYEQDDEEENEEEEEEEEEEEGEEENKEDEEFFKTFVSFNLYHNNNEKNISYDKNLVKQENDNKDEARGNDNMCGNYDIHNERGEMLDKGKSYSGDEKINTSDNAKSCSGDEKVITSDNGKSYDYVKNESEEQEEKENMLNNKKRSLECNPNEAKKICFSLEEKIGTVQSVKLKEYNELSKENIEKNKHDDNNICNYLSHNEGENVIEREDKLFNKLNNKNYRNEEEKKKNQINFDYLKKKIKNNQDVFEETIQKCFLINLKKTLNLINKIMYLKNVEFRKYNLDYIRKINYEKCFYYKNYIDIKKKISELQKDNESLKIQVDRLEKKKATLIYKLNNDNIRKHILDNNIKDYQNGIDNSKVSYFDEGENPYNRNNKNYRTDNKNSDDNNNNNNYYYNNYNSDDNYNSEDNEYNNGNYRFRNNYKKDSLNEDDVKKNPLKVCHKINSDSNIFVNFENIITKQNIIHSEPFRNLLKESNELYITLKEKEKENIILKNEILKMENKKDEEYEHLLNNTIEDKKELTRSIKELEINMMTCNMEKDKISNKVNTLEYEINVLKNIDKNQTMQLQQKENDILKMKLYIEKLKLSEKNLKDKIILLENEKDKMLSGIHIKDNSFNEESKSEEGKIQLRDIQNDNDEKYDDEKKRFKELFIENQKLKEELNKKRNVEEELHSLRKNYNIINEEIEEITKEFEKKQEQVDEMILQIKNKELELLDKFNNKMNKAYVEEKLKELKNTYEEKMKHINNIYKKHDDFVNIYLNLFFQARKNAILSDSQREEQMNLFIKLKDKYDIIFQKKIELTDILKNVYDCNKKLIGHCQDLEKENSTLQNKLSNEIKNSKMLSKNLSKNSDDHLLIEENNELRRRLICSVCMENFRNYIIIKCGHIYCNNCIFNNLKTRNRKCPQCKVPFDKKDLQKIFLD</sequence>
<dbReference type="EMBL" id="AL844505">
    <property type="protein sequence ID" value="CAG25204.1"/>
    <property type="molecule type" value="Genomic_DNA"/>
</dbReference>
<dbReference type="RefSeq" id="XP_966024.1">
    <property type="nucleotide sequence ID" value="XM_960931.1"/>
</dbReference>
<dbReference type="SMR" id="Q6LFN2"/>
<dbReference type="BioGRID" id="1210459">
    <property type="interactions" value="4"/>
</dbReference>
<dbReference type="IntAct" id="Q6LFN2">
    <property type="interactions" value="4"/>
</dbReference>
<dbReference type="STRING" id="36329.Q6LFN2"/>
<dbReference type="PaxDb" id="5833-PFF0165c"/>
<dbReference type="EnsemblProtists" id="CAG25204">
    <property type="protein sequence ID" value="CAG25204"/>
    <property type="gene ID" value="PF3D7_0603400"/>
</dbReference>
<dbReference type="GeneID" id="3885786"/>
<dbReference type="KEGG" id="pfa:PF3D7_0603400"/>
<dbReference type="VEuPathDB" id="PlasmoDB:PF3D7_0603400"/>
<dbReference type="HOGENOM" id="CLU_325573_0_0_1"/>
<dbReference type="InParanoid" id="Q6LFN2"/>
<dbReference type="OMA" id="DEMIIQI"/>
<dbReference type="OrthoDB" id="10266039at2759"/>
<dbReference type="PhylomeDB" id="Q6LFN2"/>
<dbReference type="Proteomes" id="UP000001450">
    <property type="component" value="Chromosome 6"/>
</dbReference>
<dbReference type="GO" id="GO:0020002">
    <property type="term" value="C:host cell plasma membrane"/>
    <property type="evidence" value="ECO:0007669"/>
    <property type="project" value="UniProtKB-SubCell"/>
</dbReference>
<dbReference type="GO" id="GO:0020036">
    <property type="term" value="C:Maurer's cleft"/>
    <property type="evidence" value="ECO:0000314"/>
    <property type="project" value="GeneDB"/>
</dbReference>
<dbReference type="GO" id="GO:0016020">
    <property type="term" value="C:membrane"/>
    <property type="evidence" value="ECO:0007669"/>
    <property type="project" value="UniProtKB-KW"/>
</dbReference>
<dbReference type="GO" id="GO:0061630">
    <property type="term" value="F:ubiquitin protein ligase activity"/>
    <property type="evidence" value="ECO:0000318"/>
    <property type="project" value="GO_Central"/>
</dbReference>
<dbReference type="GO" id="GO:0008270">
    <property type="term" value="F:zinc ion binding"/>
    <property type="evidence" value="ECO:0007669"/>
    <property type="project" value="UniProtKB-KW"/>
</dbReference>
<dbReference type="GO" id="GO:0043161">
    <property type="term" value="P:proteasome-mediated ubiquitin-dependent protein catabolic process"/>
    <property type="evidence" value="ECO:0000318"/>
    <property type="project" value="GO_Central"/>
</dbReference>
<dbReference type="CDD" id="cd16499">
    <property type="entry name" value="RING-HC_Bre1-like"/>
    <property type="match status" value="1"/>
</dbReference>
<dbReference type="FunFam" id="3.30.40.10:FF:000597">
    <property type="entry name" value="RING finger protein"/>
    <property type="match status" value="1"/>
</dbReference>
<dbReference type="Gene3D" id="3.30.40.10">
    <property type="entry name" value="Zinc/RING finger domain, C3HC4 (zinc finger)"/>
    <property type="match status" value="1"/>
</dbReference>
<dbReference type="InterPro" id="IPR018957">
    <property type="entry name" value="Znf_C3HC4_RING-type"/>
</dbReference>
<dbReference type="InterPro" id="IPR001841">
    <property type="entry name" value="Znf_RING"/>
</dbReference>
<dbReference type="InterPro" id="IPR013083">
    <property type="entry name" value="Znf_RING/FYVE/PHD"/>
</dbReference>
<dbReference type="InterPro" id="IPR017907">
    <property type="entry name" value="Znf_RING_CS"/>
</dbReference>
<dbReference type="PANTHER" id="PTHR15898">
    <property type="entry name" value="BIFUNCTIONAL APOPTOSIS REGULATOR"/>
    <property type="match status" value="1"/>
</dbReference>
<dbReference type="PANTHER" id="PTHR15898:SF13">
    <property type="entry name" value="BIFUNCTIONAL APOPTOSIS REGULATOR"/>
    <property type="match status" value="1"/>
</dbReference>
<dbReference type="Pfam" id="PF00097">
    <property type="entry name" value="zf-C3HC4"/>
    <property type="match status" value="1"/>
</dbReference>
<dbReference type="SMART" id="SM00184">
    <property type="entry name" value="RING"/>
    <property type="match status" value="1"/>
</dbReference>
<dbReference type="SUPFAM" id="SSF57850">
    <property type="entry name" value="RING/U-box"/>
    <property type="match status" value="1"/>
</dbReference>
<dbReference type="PROSITE" id="PS00518">
    <property type="entry name" value="ZF_RING_1"/>
    <property type="match status" value="1"/>
</dbReference>
<dbReference type="PROSITE" id="PS50089">
    <property type="entry name" value="ZF_RING_2"/>
    <property type="match status" value="1"/>
</dbReference>
<evidence type="ECO:0000255" key="1"/>
<evidence type="ECO:0000255" key="2">
    <source>
        <dbReference type="PROSITE-ProRule" id="PRU00175"/>
    </source>
</evidence>
<evidence type="ECO:0000256" key="3">
    <source>
        <dbReference type="SAM" id="MobiDB-lite"/>
    </source>
</evidence>
<evidence type="ECO:0000269" key="4">
    <source>
    </source>
</evidence>
<evidence type="ECO:0000269" key="5">
    <source>
    </source>
</evidence>
<evidence type="ECO:0000303" key="6">
    <source>
    </source>
</evidence>
<evidence type="ECO:0000305" key="7"/>
<evidence type="ECO:0000312" key="8">
    <source>
        <dbReference type="EMBL" id="CAG25204.1"/>
    </source>
</evidence>
<proteinExistence type="evidence at protein level"/>
<reference key="1">
    <citation type="journal article" date="2002" name="Nature">
        <title>Genome sequence of the human malaria parasite Plasmodium falciparum.</title>
        <authorList>
            <person name="Gardner M.J."/>
            <person name="Hall N."/>
            <person name="Fung E."/>
            <person name="White O."/>
            <person name="Berriman M."/>
            <person name="Hyman R.W."/>
            <person name="Carlton J.M."/>
            <person name="Pain A."/>
            <person name="Nelson K.E."/>
            <person name="Bowman S."/>
            <person name="Paulsen I.T."/>
            <person name="James K.D."/>
            <person name="Eisen J.A."/>
            <person name="Rutherford K.M."/>
            <person name="Salzberg S.L."/>
            <person name="Craig A."/>
            <person name="Kyes S."/>
            <person name="Chan M.-S."/>
            <person name="Nene V."/>
            <person name="Shallom S.J."/>
            <person name="Suh B."/>
            <person name="Peterson J."/>
            <person name="Angiuoli S."/>
            <person name="Pertea M."/>
            <person name="Allen J."/>
            <person name="Selengut J."/>
            <person name="Haft D."/>
            <person name="Mather M.W."/>
            <person name="Vaidya A.B."/>
            <person name="Martin D.M.A."/>
            <person name="Fairlamb A.H."/>
            <person name="Fraunholz M.J."/>
            <person name="Roos D.S."/>
            <person name="Ralph S.A."/>
            <person name="McFadden G.I."/>
            <person name="Cummings L.M."/>
            <person name="Subramanian G.M."/>
            <person name="Mungall C."/>
            <person name="Venter J.C."/>
            <person name="Carucci D.J."/>
            <person name="Hoffman S.L."/>
            <person name="Newbold C."/>
            <person name="Davis R.W."/>
            <person name="Fraser C.M."/>
            <person name="Barrell B.G."/>
        </authorList>
    </citation>
    <scope>NUCLEOTIDE SEQUENCE [LARGE SCALE GENOMIC DNA]</scope>
    <source>
        <strain>3D7</strain>
    </source>
</reference>
<reference evidence="8" key="2">
    <citation type="journal article" date="2002" name="Nature">
        <title>Sequence of Plasmodium falciparum chromosomes 1, 3-9 and 13.</title>
        <authorList>
            <person name="Hall N."/>
            <person name="Pain A."/>
            <person name="Berriman M."/>
            <person name="Churcher C.M."/>
            <person name="Harris B."/>
            <person name="Harris D."/>
            <person name="Mungall K.L."/>
            <person name="Bowman S."/>
            <person name="Atkin R."/>
            <person name="Baker S."/>
            <person name="Barron A."/>
            <person name="Brooks K."/>
            <person name="Buckee C.O."/>
            <person name="Burrows C."/>
            <person name="Cherevach I."/>
            <person name="Chillingworth C."/>
            <person name="Chillingworth T."/>
            <person name="Christodoulou Z."/>
            <person name="Clark L."/>
            <person name="Clark R."/>
            <person name="Corton C."/>
            <person name="Cronin A."/>
            <person name="Davies R.M."/>
            <person name="Davis P."/>
            <person name="Dear P."/>
            <person name="Dearden F."/>
            <person name="Doggett J."/>
            <person name="Feltwell T."/>
            <person name="Goble A."/>
            <person name="Goodhead I."/>
            <person name="Gwilliam R."/>
            <person name="Hamlin N."/>
            <person name="Hance Z."/>
            <person name="Harper D."/>
            <person name="Hauser H."/>
            <person name="Hornsby T."/>
            <person name="Holroyd S."/>
            <person name="Horrocks P."/>
            <person name="Humphray S."/>
            <person name="Jagels K."/>
            <person name="James K.D."/>
            <person name="Johnson D."/>
            <person name="Kerhornou A."/>
            <person name="Knights A."/>
            <person name="Konfortov B."/>
            <person name="Kyes S."/>
            <person name="Larke N."/>
            <person name="Lawson D."/>
            <person name="Lennard N."/>
            <person name="Line A."/>
            <person name="Maddison M."/>
            <person name="Mclean J."/>
            <person name="Mooney P."/>
            <person name="Moule S."/>
            <person name="Murphy L."/>
            <person name="Oliver K."/>
            <person name="Ormond D."/>
            <person name="Price C."/>
            <person name="Quail M.A."/>
            <person name="Rabbinowitsch E."/>
            <person name="Rajandream M.A."/>
            <person name="Rutter S."/>
            <person name="Rutherford K.M."/>
            <person name="Sanders M."/>
            <person name="Simmonds M."/>
            <person name="Seeger K."/>
            <person name="Sharp S."/>
            <person name="Smith R."/>
            <person name="Squares R."/>
            <person name="Squares S."/>
            <person name="Stevens K."/>
            <person name="Taylor K."/>
            <person name="Tivey A."/>
            <person name="Unwin L."/>
            <person name="Whitehead S."/>
            <person name="Woodward J.R."/>
            <person name="Sulston J.E."/>
            <person name="Craig A."/>
            <person name="Newbold C."/>
            <person name="Barrell B.G."/>
        </authorList>
    </citation>
    <scope>NUCLEOTIDE SEQUENCE [LARGE SCALE GENOMIC DNA]</scope>
    <source>
        <strain>3D7</strain>
    </source>
</reference>
<reference evidence="7" key="3">
    <citation type="journal article" date="2007" name="PLoS ONE">
        <title>Rapid identification of malaria vaccine candidates based on alpha-helical coiled coil protein motif.</title>
        <authorList>
            <person name="Villard V."/>
            <person name="Agak G.W."/>
            <person name="Frank G."/>
            <person name="Jafarshad A."/>
            <person name="Servis C."/>
            <person name="Nebie I."/>
            <person name="Sirima S.B."/>
            <person name="Felger I."/>
            <person name="Arevalo-Herrera M."/>
            <person name="Herrera S."/>
            <person name="Heitz F."/>
            <person name="Baecker V."/>
            <person name="Druilhe P."/>
            <person name="Kajava A.V."/>
            <person name="Corradin G."/>
        </authorList>
    </citation>
    <scope>SYNTHESIS OF 481-505 AND 845-871</scope>
    <scope>SUBCELLULAR LOCATION</scope>
    <scope>DEVELOPMENTAL STAGE</scope>
    <scope>BIOTECHNOLOGY</scope>
</reference>
<reference key="4">
    <citation type="journal article" date="2012" name="PLoS ONE">
        <title>Cell biological characterization of the malaria vaccine candidate trophozoite exported protein 1.</title>
        <authorList>
            <person name="Kulangara C."/>
            <person name="Luedin S."/>
            <person name="Dietz O."/>
            <person name="Rusch S."/>
            <person name="Frank G."/>
            <person name="Mueller D."/>
            <person name="Moser M."/>
            <person name="Kajava A.V."/>
            <person name="Corradin G."/>
            <person name="Beck H.P."/>
            <person name="Felger I."/>
        </authorList>
    </citation>
    <scope>SUBCELLULAR LOCATION</scope>
    <scope>DEVELOPMENTAL STAGE</scope>
</reference>
<organism>
    <name type="scientific">Plasmodium falciparum (isolate 3D7)</name>
    <dbReference type="NCBI Taxonomy" id="36329"/>
    <lineage>
        <taxon>Eukaryota</taxon>
        <taxon>Sar</taxon>
        <taxon>Alveolata</taxon>
        <taxon>Apicomplexa</taxon>
        <taxon>Aconoidasida</taxon>
        <taxon>Haemosporida</taxon>
        <taxon>Plasmodiidae</taxon>
        <taxon>Plasmodium</taxon>
        <taxon>Plasmodium (Laverania)</taxon>
    </lineage>
</organism>
<keyword id="KW-0175">Coiled coil</keyword>
<keyword id="KW-1032">Host cell membrane</keyword>
<keyword id="KW-1043">Host membrane</keyword>
<keyword id="KW-0472">Membrane</keyword>
<keyword id="KW-0479">Metal-binding</keyword>
<keyword id="KW-1185">Reference proteome</keyword>
<keyword id="KW-0862">Zinc</keyword>
<keyword id="KW-0863">Zinc-finger</keyword>
<comment type="subcellular location">
    <subcellularLocation>
        <location evidence="4 5">Host cell membrane</location>
        <topology evidence="5">Peripheral membrane protein</topology>
        <orientation evidence="5">Cytoplasmic side</orientation>
    </subcellularLocation>
    <text evidence="5">In late rings, localizes to punctuated structures in the parasite cytoplasm (PubMed:23056243). In trophozoites, exported to the host erythrocyte cytoplasm where it localizes to Maurer's clefts (PubMed:23056243). In schizonts, localizes near to the host erythrocyte cell membrane (PubMed:23056243).</text>
</comment>
<comment type="developmental stage">
    <text evidence="4 5">During the asexual blood stage, expressed in late ring, trophozoite and schizont stages (at protein level).</text>
</comment>
<comment type="biotechnology">
    <text evidence="4">Possible candidate for an effective malaria vaccine as determined by epitope response in sera.</text>
</comment>
<protein>
    <recommendedName>
        <fullName evidence="6">Trophozoite exported protein 1</fullName>
    </recommendedName>
</protein>
<gene>
    <name evidence="6" type="primary">TEX1</name>
    <name type="ORF">PF3D7_0603400</name>
    <name type="ORF">PFF0165c</name>
</gene>